<keyword id="KW-0027">Amidation</keyword>
<keyword id="KW-0903">Direct protein sequencing</keyword>
<keyword id="KW-1015">Disulfide bond</keyword>
<keyword id="KW-0872">Ion channel impairing toxin</keyword>
<keyword id="KW-0166">Nematocyst</keyword>
<keyword id="KW-0528">Neurotoxin</keyword>
<keyword id="KW-0964">Secreted</keyword>
<keyword id="KW-0800">Toxin</keyword>
<keyword id="KW-0738">Voltage-gated sodium channel impairing toxin</keyword>
<feature type="chain" id="PRO_0000221524" description="Delta-stichotoxin-Hcr1a" evidence="3">
    <location>
        <begin position="1"/>
        <end position="48"/>
    </location>
</feature>
<feature type="peptide" id="PRO_0000453742" description="Delta-stichotoxin-Hcr1f" evidence="2">
    <location>
        <begin position="1"/>
        <end position="12"/>
    </location>
</feature>
<feature type="peptide" id="PRO_0000453743" description="Delta-stichotoxin-Hcr1f" evidence="2">
    <location>
        <begin position="14"/>
        <end position="48"/>
    </location>
</feature>
<feature type="modified residue" description="Lysine amide; partial; in Delta-stichotoxin-Hcr1f" evidence="2">
    <location>
        <position position="48"/>
    </location>
</feature>
<feature type="disulfide bond" evidence="1">
    <location>
        <begin position="3"/>
        <end position="43"/>
    </location>
</feature>
<feature type="disulfide bond" evidence="1">
    <location>
        <begin position="5"/>
        <end position="33"/>
    </location>
</feature>
<feature type="disulfide bond" evidence="1">
    <location>
        <begin position="26"/>
        <end position="44"/>
    </location>
</feature>
<protein>
    <recommendedName>
        <fullName evidence="4">Delta-stichotoxin-Hcr1a</fullName>
        <shortName evidence="4">Delta-SHTX-Hcr1a</shortName>
    </recommendedName>
    <alternativeName>
        <fullName evidence="5 7">Neurotoxin III</fullName>
    </alternativeName>
    <alternativeName>
        <fullName>RTX-III</fullName>
    </alternativeName>
    <alternativeName>
        <fullName>Rm3</fullName>
    </alternativeName>
    <component>
        <recommendedName>
            <fullName evidence="8">Delta-stichotoxin-Hcr1f</fullName>
            <shortName evidence="8">Delta-SHTX-Hcr1f</shortName>
        </recommendedName>
        <alternativeName>
            <fullName evidence="6">RTX-VI</fullName>
        </alternativeName>
    </component>
</protein>
<comment type="function">
    <molecule>Delta-stichotoxin-Hcr1a</molecule>
    <text evidence="2">Binds to site 3 of voltage-gated sodium channels and inhibits the inactivation process. Specifically inhibits mammalian Nav1.3/SCN3A and Nav1.6/SCN8A sodium channels, as well as insect BgNav1 and VdNav1 sodium channels.</text>
</comment>
<comment type="function">
    <molecule>Delta-stichotoxin-Hcr1f</molecule>
    <text evidence="2">Binds to site 3 of voltage-gated sodium channels and inhibits the inactivation process. Specifically inhibits mammalian Nav1.2/SCN3A (low inhibition) and Nav1.6/SCN8A sodium channels, as well as insect BgNav1 and VdNav1 sodium channels.</text>
</comment>
<comment type="subunit">
    <molecule>Delta-stichotoxin-Hcr1f</molecule>
    <text evidence="9">Probably composed of two peptide chains of 12 and 35 residues connected by two disulfide bonds (Cys-3-Cys-43 and Cys-5-Cys-33).</text>
</comment>
<comment type="subcellular location">
    <subcellularLocation>
        <location evidence="3">Secreted</location>
    </subcellularLocation>
    <subcellularLocation>
        <location>Nematocyst</location>
    </subcellularLocation>
</comment>
<comment type="PTM">
    <text evidence="9">Delta-SHTX-Hcr1f (RTX-VI) may be the result of post-translational modification of delta-SHTX-Hcr1a (RTX-III), which would consist of Arg-13 cleavage.</text>
</comment>
<comment type="miscellaneous">
    <molecule>Delta-stichotoxin-Hcr1a</molecule>
    <text evidence="2">Is not active on mammalian Nav1.1/SCN1A, Nav1.2/SCN2A, Nav1.4/SCN4A, Nav1.5/SCN5A, Nav1.8/SCN10A sodium channels.</text>
</comment>
<comment type="miscellaneous">
    <molecule>Delta-stichotoxin-Hcr1f</molecule>
    <text evidence="2">Is not active on mammalian Nav1.1/SCN1A, Nav1.3/SCN3A, Nav1.4/SCN4A, Nav1.5/SCN5A, Nav1.8/SCN10A sodium channels.</text>
</comment>
<comment type="miscellaneous">
    <text evidence="8">A synonymy between H.magnifica and R.crispa is controversial.</text>
</comment>
<comment type="similarity">
    <text evidence="8">Belongs to the sea anemone sodium channel inhibitory toxin family. Type II subfamily.</text>
</comment>
<name>NA23_RADCR</name>
<dbReference type="SMR" id="P30832"/>
<dbReference type="GO" id="GO:0005576">
    <property type="term" value="C:extracellular region"/>
    <property type="evidence" value="ECO:0007669"/>
    <property type="project" value="UniProtKB-SubCell"/>
</dbReference>
<dbReference type="GO" id="GO:0042151">
    <property type="term" value="C:nematocyst"/>
    <property type="evidence" value="ECO:0007669"/>
    <property type="project" value="UniProtKB-SubCell"/>
</dbReference>
<dbReference type="GO" id="GO:0017080">
    <property type="term" value="F:sodium channel regulator activity"/>
    <property type="evidence" value="ECO:0007669"/>
    <property type="project" value="UniProtKB-KW"/>
</dbReference>
<dbReference type="GO" id="GO:0090729">
    <property type="term" value="F:toxin activity"/>
    <property type="evidence" value="ECO:0007669"/>
    <property type="project" value="UniProtKB-KW"/>
</dbReference>
<dbReference type="GO" id="GO:0009966">
    <property type="term" value="P:regulation of signal transduction"/>
    <property type="evidence" value="ECO:0007669"/>
    <property type="project" value="InterPro"/>
</dbReference>
<dbReference type="Gene3D" id="2.20.20.10">
    <property type="entry name" value="Anthopleurin-A"/>
    <property type="match status" value="1"/>
</dbReference>
<dbReference type="InterPro" id="IPR000693">
    <property type="entry name" value="Anenome_toxin"/>
</dbReference>
<dbReference type="InterPro" id="IPR023355">
    <property type="entry name" value="Myo_ane_neurotoxin_sf"/>
</dbReference>
<dbReference type="Pfam" id="PF00706">
    <property type="entry name" value="Toxin_4"/>
    <property type="match status" value="1"/>
</dbReference>
<dbReference type="PIRSF" id="PIRSF001905">
    <property type="entry name" value="Anenome_toxin"/>
    <property type="match status" value="1"/>
</dbReference>
<dbReference type="SUPFAM" id="SSF57392">
    <property type="entry name" value="Defensin-like"/>
    <property type="match status" value="1"/>
</dbReference>
<reference key="1">
    <citation type="journal article" date="1985" name="Bioorg. Khim.">
        <title>Amino-acid sequence of neurotoxin III from the sea anemone Radianthus macrodactylus.</title>
        <authorList>
            <person name="Zykova T.A."/>
            <person name="Vinokurov L.M."/>
            <person name="Kozlovskaya E.P."/>
            <person name="Elyakov G.B."/>
        </authorList>
    </citation>
    <scope>PROTEIN SEQUENCE</scope>
    <scope>SUBCELLULAR LOCATION</scope>
</reference>
<reference key="2">
    <citation type="journal article" date="2020" name="Dokl. Biochem. Biophys.">
        <title>New sea anemone toxin RTX-VI selectively modulates voltage-gated sodium channels.</title>
        <authorList>
            <person name="Kalina R.S."/>
            <person name="Peigneur S."/>
            <person name="Gladkikh I.N."/>
            <person name="Dmitrenok P.S."/>
            <person name="Kim N.Y."/>
            <person name="Leychenko E.V."/>
            <person name="Monastyrnaya M.M."/>
            <person name="Tytgat J."/>
            <person name="Kozlovskaya E.P."/>
        </authorList>
    </citation>
    <scope>PROTEIN SEQUENCE OF 1-12 AND 14-48</scope>
    <scope>FUNCTION</scope>
    <scope>SUBCELLULAR LOCATION</scope>
    <scope>AMIDATION AT LYS-48</scope>
</reference>
<reference key="3">
    <citation type="journal article" date="1989" name="Bioorg. Khim.">
        <title>Disulfide bonds in neurotoxin-III from the sea anenome Radianthus macrodactylus.</title>
        <authorList>
            <person name="Zykova T.A."/>
            <person name="Kozlovskaya E.P."/>
        </authorList>
    </citation>
    <scope>DISULFIDE BONDS</scope>
</reference>
<reference key="4">
    <citation type="journal article" date="2012" name="Toxicon">
        <title>Development of a rational nomenclature for naming peptide and protein toxins from sea anemones.</title>
        <authorList>
            <person name="Oliveira J.S."/>
            <person name="Fuentes-Silva D."/>
            <person name="King G.F."/>
        </authorList>
    </citation>
    <scope>NOMENCLATURE</scope>
</reference>
<sequence>GNCKCDDEGPYVRTAPLTGYVDLGYCNEGWEKCASYYSPIAECCRKKK</sequence>
<proteinExistence type="evidence at protein level"/>
<evidence type="ECO:0000269" key="1">
    <source>
    </source>
</evidence>
<evidence type="ECO:0000269" key="2">
    <source>
    </source>
</evidence>
<evidence type="ECO:0000269" key="3">
    <source ref="1"/>
</evidence>
<evidence type="ECO:0000303" key="4">
    <source>
    </source>
</evidence>
<evidence type="ECO:0000303" key="5">
    <source>
    </source>
</evidence>
<evidence type="ECO:0000303" key="6">
    <source>
    </source>
</evidence>
<evidence type="ECO:0000303" key="7">
    <source ref="1"/>
</evidence>
<evidence type="ECO:0000305" key="8"/>
<evidence type="ECO:0000305" key="9">
    <source>
    </source>
</evidence>
<accession>P30832</accession>
<organism>
    <name type="scientific">Radianthus crispa</name>
    <name type="common">Leathery sea anemone</name>
    <name type="synonym">Heteractis crispa</name>
    <dbReference type="NCBI Taxonomy" id="3122430"/>
    <lineage>
        <taxon>Eukaryota</taxon>
        <taxon>Metazoa</taxon>
        <taxon>Cnidaria</taxon>
        <taxon>Anthozoa</taxon>
        <taxon>Hexacorallia</taxon>
        <taxon>Actiniaria</taxon>
        <taxon>Stichodactylidae</taxon>
        <taxon>Radianthus</taxon>
    </lineage>
</organism>